<organism>
    <name type="scientific">Campylobacter jejuni (strain RM1221)</name>
    <dbReference type="NCBI Taxonomy" id="195099"/>
    <lineage>
        <taxon>Bacteria</taxon>
        <taxon>Pseudomonadati</taxon>
        <taxon>Campylobacterota</taxon>
        <taxon>Epsilonproteobacteria</taxon>
        <taxon>Campylobacterales</taxon>
        <taxon>Campylobacteraceae</taxon>
        <taxon>Campylobacter</taxon>
    </lineage>
</organism>
<feature type="chain" id="PRO_0000152792" description="Phosphomethylpyrimidine synthase">
    <location>
        <begin position="1"/>
        <end position="430"/>
    </location>
</feature>
<feature type="binding site" evidence="1">
    <location>
        <position position="67"/>
    </location>
    <ligand>
        <name>substrate</name>
    </ligand>
</feature>
<feature type="binding site" evidence="1">
    <location>
        <position position="96"/>
    </location>
    <ligand>
        <name>substrate</name>
    </ligand>
</feature>
<feature type="binding site" evidence="1">
    <location>
        <position position="125"/>
    </location>
    <ligand>
        <name>substrate</name>
    </ligand>
</feature>
<feature type="binding site" evidence="1">
    <location>
        <position position="161"/>
    </location>
    <ligand>
        <name>substrate</name>
    </ligand>
</feature>
<feature type="binding site" evidence="1">
    <location>
        <begin position="183"/>
        <end position="185"/>
    </location>
    <ligand>
        <name>substrate</name>
    </ligand>
</feature>
<feature type="binding site" evidence="1">
    <location>
        <begin position="224"/>
        <end position="227"/>
    </location>
    <ligand>
        <name>substrate</name>
    </ligand>
</feature>
<feature type="binding site" evidence="1">
    <location>
        <position position="263"/>
    </location>
    <ligand>
        <name>substrate</name>
    </ligand>
</feature>
<feature type="binding site" evidence="1">
    <location>
        <position position="267"/>
    </location>
    <ligand>
        <name>Zn(2+)</name>
        <dbReference type="ChEBI" id="CHEBI:29105"/>
    </ligand>
</feature>
<feature type="binding site" evidence="1">
    <location>
        <position position="290"/>
    </location>
    <ligand>
        <name>substrate</name>
    </ligand>
</feature>
<feature type="binding site" evidence="1">
    <location>
        <position position="331"/>
    </location>
    <ligand>
        <name>Zn(2+)</name>
        <dbReference type="ChEBI" id="CHEBI:29105"/>
    </ligand>
</feature>
<feature type="binding site" evidence="1">
    <location>
        <position position="406"/>
    </location>
    <ligand>
        <name>[4Fe-4S] cluster</name>
        <dbReference type="ChEBI" id="CHEBI:49883"/>
        <note>4Fe-4S-S-AdoMet</note>
    </ligand>
</feature>
<feature type="binding site" evidence="1">
    <location>
        <position position="409"/>
    </location>
    <ligand>
        <name>[4Fe-4S] cluster</name>
        <dbReference type="ChEBI" id="CHEBI:49883"/>
        <note>4Fe-4S-S-AdoMet</note>
    </ligand>
</feature>
<feature type="binding site" evidence="1">
    <location>
        <position position="413"/>
    </location>
    <ligand>
        <name>[4Fe-4S] cluster</name>
        <dbReference type="ChEBI" id="CHEBI:49883"/>
        <note>4Fe-4S-S-AdoMet</note>
    </ligand>
</feature>
<gene>
    <name evidence="1" type="primary">thiC</name>
    <name type="ordered locus">CJE0503</name>
</gene>
<comment type="function">
    <text evidence="1">Catalyzes the synthesis of the hydroxymethylpyrimidine phosphate (HMP-P) moiety of thiamine from aminoimidazole ribotide (AIR) in a radical S-adenosyl-L-methionine (SAM)-dependent reaction.</text>
</comment>
<comment type="catalytic activity">
    <reaction evidence="1">
        <text>5-amino-1-(5-phospho-beta-D-ribosyl)imidazole + S-adenosyl-L-methionine = 4-amino-2-methyl-5-(phosphooxymethyl)pyrimidine + CO + 5'-deoxyadenosine + formate + L-methionine + 3 H(+)</text>
        <dbReference type="Rhea" id="RHEA:24840"/>
        <dbReference type="ChEBI" id="CHEBI:15378"/>
        <dbReference type="ChEBI" id="CHEBI:15740"/>
        <dbReference type="ChEBI" id="CHEBI:17245"/>
        <dbReference type="ChEBI" id="CHEBI:17319"/>
        <dbReference type="ChEBI" id="CHEBI:57844"/>
        <dbReference type="ChEBI" id="CHEBI:58354"/>
        <dbReference type="ChEBI" id="CHEBI:59789"/>
        <dbReference type="ChEBI" id="CHEBI:137981"/>
        <dbReference type="EC" id="4.1.99.17"/>
    </reaction>
</comment>
<comment type="cofactor">
    <cofactor evidence="1">
        <name>[4Fe-4S] cluster</name>
        <dbReference type="ChEBI" id="CHEBI:49883"/>
    </cofactor>
    <text evidence="1">Binds 1 [4Fe-4S] cluster per subunit. The cluster is coordinated with 3 cysteines and an exchangeable S-adenosyl-L-methionine.</text>
</comment>
<comment type="pathway">
    <text evidence="1">Cofactor biosynthesis; thiamine diphosphate biosynthesis.</text>
</comment>
<comment type="subunit">
    <text evidence="1">Homodimer.</text>
</comment>
<comment type="similarity">
    <text evidence="1">Belongs to the ThiC family.</text>
</comment>
<accession>Q5HW14</accession>
<sequence>MKTQMNYAKEGIFTKEMQIVAQKENLSKDFLLENIACGKIIIPANINHKSLDPNGIGFGLRTKVNVNLGVSNDCVDYSEEMKKVELAHKFDIEAIMDLSNYGKTSRFRDELVNVSKAMIGTVPVYDAVGFLEKDLKQIGAKDFLDVVYHHAKSGVDFMTIHAGINSRAAHIFKQSKRLTNIVSRGGSVLYAWMMMKDAENPFFEYYDDLLDICLKYDVTLSLGDALRPGSTHDASDGAQISELIELSLLTQRAWDVGVQVMIEGPGHMAINEIEANMQLEKRLCKGAPFYVLGPLVTDIGAGYDHISGAIGGAVAAASGADMLCYVTPAEHLRLPNLEDVREGIVATKIAAHAGDIAKLPKERARDDEMSKARQEIDWEKMFKLAIDGEKAKKMFNERRPDDLNSCSMCGKMCAMNTMNQILKGEDVSLA</sequence>
<evidence type="ECO:0000255" key="1">
    <source>
        <dbReference type="HAMAP-Rule" id="MF_00089"/>
    </source>
</evidence>
<protein>
    <recommendedName>
        <fullName evidence="1">Phosphomethylpyrimidine synthase</fullName>
        <ecNumber evidence="1">4.1.99.17</ecNumber>
    </recommendedName>
    <alternativeName>
        <fullName evidence="1">Hydroxymethylpyrimidine phosphate synthase</fullName>
        <shortName evidence="1">HMP-P synthase</shortName>
        <shortName evidence="1">HMP-phosphate synthase</shortName>
        <shortName evidence="1">HMPP synthase</shortName>
    </alternativeName>
    <alternativeName>
        <fullName evidence="1">Thiamine biosynthesis protein ThiC</fullName>
    </alternativeName>
</protein>
<name>THIC_CAMJR</name>
<reference key="1">
    <citation type="journal article" date="2005" name="PLoS Biol.">
        <title>Major structural differences and novel potential virulence mechanisms from the genomes of multiple Campylobacter species.</title>
        <authorList>
            <person name="Fouts D.E."/>
            <person name="Mongodin E.F."/>
            <person name="Mandrell R.E."/>
            <person name="Miller W.G."/>
            <person name="Rasko D.A."/>
            <person name="Ravel J."/>
            <person name="Brinkac L.M."/>
            <person name="DeBoy R.T."/>
            <person name="Parker C.T."/>
            <person name="Daugherty S.C."/>
            <person name="Dodson R.J."/>
            <person name="Durkin A.S."/>
            <person name="Madupu R."/>
            <person name="Sullivan S.A."/>
            <person name="Shetty J.U."/>
            <person name="Ayodeji M.A."/>
            <person name="Shvartsbeyn A."/>
            <person name="Schatz M.C."/>
            <person name="Badger J.H."/>
            <person name="Fraser C.M."/>
            <person name="Nelson K.E."/>
        </authorList>
    </citation>
    <scope>NUCLEOTIDE SEQUENCE [LARGE SCALE GENOMIC DNA]</scope>
    <source>
        <strain>RM1221</strain>
    </source>
</reference>
<dbReference type="EC" id="4.1.99.17" evidence="1"/>
<dbReference type="EMBL" id="CP000025">
    <property type="protein sequence ID" value="AAW35090.1"/>
    <property type="molecule type" value="Genomic_DNA"/>
</dbReference>
<dbReference type="RefSeq" id="WP_002867618.1">
    <property type="nucleotide sequence ID" value="NC_003912.7"/>
</dbReference>
<dbReference type="SMR" id="Q5HW14"/>
<dbReference type="KEGG" id="cjr:CJE0503"/>
<dbReference type="HOGENOM" id="CLU_013181_2_2_7"/>
<dbReference type="UniPathway" id="UPA00060"/>
<dbReference type="GO" id="GO:0005829">
    <property type="term" value="C:cytosol"/>
    <property type="evidence" value="ECO:0007669"/>
    <property type="project" value="TreeGrafter"/>
</dbReference>
<dbReference type="GO" id="GO:0051539">
    <property type="term" value="F:4 iron, 4 sulfur cluster binding"/>
    <property type="evidence" value="ECO:0007669"/>
    <property type="project" value="UniProtKB-KW"/>
</dbReference>
<dbReference type="GO" id="GO:0016830">
    <property type="term" value="F:carbon-carbon lyase activity"/>
    <property type="evidence" value="ECO:0007669"/>
    <property type="project" value="InterPro"/>
</dbReference>
<dbReference type="GO" id="GO:0008270">
    <property type="term" value="F:zinc ion binding"/>
    <property type="evidence" value="ECO:0007669"/>
    <property type="project" value="UniProtKB-UniRule"/>
</dbReference>
<dbReference type="GO" id="GO:0009228">
    <property type="term" value="P:thiamine biosynthetic process"/>
    <property type="evidence" value="ECO:0007669"/>
    <property type="project" value="UniProtKB-KW"/>
</dbReference>
<dbReference type="GO" id="GO:0009229">
    <property type="term" value="P:thiamine diphosphate biosynthetic process"/>
    <property type="evidence" value="ECO:0007669"/>
    <property type="project" value="UniProtKB-UniRule"/>
</dbReference>
<dbReference type="FunFam" id="3.20.20.540:FF:000001">
    <property type="entry name" value="Phosphomethylpyrimidine synthase"/>
    <property type="match status" value="1"/>
</dbReference>
<dbReference type="Gene3D" id="6.10.250.620">
    <property type="match status" value="1"/>
</dbReference>
<dbReference type="Gene3D" id="3.20.20.540">
    <property type="entry name" value="Radical SAM ThiC family, central domain"/>
    <property type="match status" value="1"/>
</dbReference>
<dbReference type="HAMAP" id="MF_00089">
    <property type="entry name" value="ThiC"/>
    <property type="match status" value="1"/>
</dbReference>
<dbReference type="InterPro" id="IPR037509">
    <property type="entry name" value="ThiC"/>
</dbReference>
<dbReference type="InterPro" id="IPR038521">
    <property type="entry name" value="ThiC/Bza_core_dom"/>
</dbReference>
<dbReference type="InterPro" id="IPR002817">
    <property type="entry name" value="ThiC/BzaA/B"/>
</dbReference>
<dbReference type="NCBIfam" id="NF009895">
    <property type="entry name" value="PRK13352.1"/>
    <property type="match status" value="1"/>
</dbReference>
<dbReference type="NCBIfam" id="TIGR00190">
    <property type="entry name" value="thiC"/>
    <property type="match status" value="1"/>
</dbReference>
<dbReference type="PANTHER" id="PTHR30557:SF1">
    <property type="entry name" value="PHOSPHOMETHYLPYRIMIDINE SYNTHASE, CHLOROPLASTIC"/>
    <property type="match status" value="1"/>
</dbReference>
<dbReference type="PANTHER" id="PTHR30557">
    <property type="entry name" value="THIAMINE BIOSYNTHESIS PROTEIN THIC"/>
    <property type="match status" value="1"/>
</dbReference>
<dbReference type="Pfam" id="PF01964">
    <property type="entry name" value="ThiC_Rad_SAM"/>
    <property type="match status" value="1"/>
</dbReference>
<dbReference type="SFLD" id="SFLDF00407">
    <property type="entry name" value="phosphomethylpyrimidine_syntha"/>
    <property type="match status" value="1"/>
</dbReference>
<dbReference type="SFLD" id="SFLDG01114">
    <property type="entry name" value="phosphomethylpyrimidine_syntha"/>
    <property type="match status" value="1"/>
</dbReference>
<dbReference type="SFLD" id="SFLDS00113">
    <property type="entry name" value="Radical_SAM_Phosphomethylpyrim"/>
    <property type="match status" value="1"/>
</dbReference>
<proteinExistence type="inferred from homology"/>
<keyword id="KW-0004">4Fe-4S</keyword>
<keyword id="KW-0408">Iron</keyword>
<keyword id="KW-0411">Iron-sulfur</keyword>
<keyword id="KW-0456">Lyase</keyword>
<keyword id="KW-0479">Metal-binding</keyword>
<keyword id="KW-0949">S-adenosyl-L-methionine</keyword>
<keyword id="KW-0784">Thiamine biosynthesis</keyword>
<keyword id="KW-0862">Zinc</keyword>